<dbReference type="EMBL" id="AB006202">
    <property type="protein sequence ID" value="BAA22054.1"/>
    <property type="molecule type" value="mRNA"/>
</dbReference>
<dbReference type="EMBL" id="AB026906">
    <property type="protein sequence ID" value="BAA81889.1"/>
    <property type="molecule type" value="Genomic_DNA"/>
</dbReference>
<dbReference type="EMBL" id="AK075360">
    <property type="protein sequence ID" value="BAG52120.1"/>
    <property type="molecule type" value="mRNA"/>
</dbReference>
<dbReference type="EMBL" id="BT007238">
    <property type="protein sequence ID" value="AAP35902.1"/>
    <property type="molecule type" value="mRNA"/>
</dbReference>
<dbReference type="EMBL" id="CR456932">
    <property type="protein sequence ID" value="CAG33213.1"/>
    <property type="molecule type" value="mRNA"/>
</dbReference>
<dbReference type="EMBL" id="AP002007">
    <property type="status" value="NOT_ANNOTATED_CDS"/>
    <property type="molecule type" value="Genomic_DNA"/>
</dbReference>
<dbReference type="EMBL" id="CH471065">
    <property type="protein sequence ID" value="EAW67181.1"/>
    <property type="molecule type" value="Genomic_DNA"/>
</dbReference>
<dbReference type="EMBL" id="BC005263">
    <property type="protein sequence ID" value="AAH05263.1"/>
    <property type="molecule type" value="mRNA"/>
</dbReference>
<dbReference type="EMBL" id="BC009574">
    <property type="protein sequence ID" value="AAH09574.1"/>
    <property type="molecule type" value="mRNA"/>
</dbReference>
<dbReference type="EMBL" id="BC012603">
    <property type="protein sequence ID" value="AAH12603.1"/>
    <property type="molecule type" value="mRNA"/>
</dbReference>
<dbReference type="EMBL" id="BC015188">
    <property type="protein sequence ID" value="AAH15188.1"/>
    <property type="molecule type" value="mRNA"/>
</dbReference>
<dbReference type="EMBL" id="BC015992">
    <property type="protein sequence ID" value="AAH15992.1"/>
    <property type="molecule type" value="mRNA"/>
</dbReference>
<dbReference type="EMBL" id="BC022350">
    <property type="protein sequence ID" value="AAH22350.1"/>
    <property type="molecule type" value="mRNA"/>
</dbReference>
<dbReference type="EMBL" id="BC070307">
    <property type="protein sequence ID" value="AAH70307.1"/>
    <property type="molecule type" value="mRNA"/>
</dbReference>
<dbReference type="EMBL" id="BC071755">
    <property type="protein sequence ID" value="AAH71755.1"/>
    <property type="molecule type" value="mRNA"/>
</dbReference>
<dbReference type="EMBL" id="BC071756">
    <property type="protein sequence ID" value="AAH71756.1"/>
    <property type="molecule type" value="mRNA"/>
</dbReference>
<dbReference type="CCDS" id="CCDS31678.1">
    <molecule id="O14521-1"/>
</dbReference>
<dbReference type="CCDS" id="CCDS60958.1">
    <molecule id="O14521-4"/>
</dbReference>
<dbReference type="CCDS" id="CCDS60959.1">
    <molecule id="O14521-3"/>
</dbReference>
<dbReference type="CCDS" id="CCDS60960.1">
    <molecule id="O14521-2"/>
</dbReference>
<dbReference type="RefSeq" id="NP_001263432.1">
    <molecule id="O14521-3"/>
    <property type="nucleotide sequence ID" value="NM_001276503.2"/>
</dbReference>
<dbReference type="RefSeq" id="NP_001263433.1">
    <molecule id="O14521-2"/>
    <property type="nucleotide sequence ID" value="NM_001276504.2"/>
</dbReference>
<dbReference type="RefSeq" id="NP_001263435.1">
    <molecule id="O14521-4"/>
    <property type="nucleotide sequence ID" value="NM_001276506.2"/>
</dbReference>
<dbReference type="RefSeq" id="NP_002993.1">
    <molecule id="O14521-1"/>
    <property type="nucleotide sequence ID" value="NM_003002.4"/>
</dbReference>
<dbReference type="PDB" id="8GS8">
    <property type="method" value="EM"/>
    <property type="resolution" value="2.86 A"/>
    <property type="chains" value="D=1-159"/>
</dbReference>
<dbReference type="PDBsum" id="8GS8"/>
<dbReference type="EMDB" id="EMD-34225"/>
<dbReference type="SMR" id="O14521"/>
<dbReference type="BioGRID" id="112293">
    <property type="interactions" value="31"/>
</dbReference>
<dbReference type="ComplexPortal" id="CPX-561">
    <property type="entry name" value="Mitochondrial respiratory chain complex II"/>
</dbReference>
<dbReference type="FunCoup" id="O14521">
    <property type="interactions" value="1586"/>
</dbReference>
<dbReference type="IntAct" id="O14521">
    <property type="interactions" value="17"/>
</dbReference>
<dbReference type="MINT" id="O14521"/>
<dbReference type="STRING" id="9606.ENSP00000364699"/>
<dbReference type="DrugBank" id="DB04141">
    <property type="generic name" value="2-Hexyloxy-6-Hydroxymethyl-Tetrahydro-Pyran-3,4,5-Triol"/>
</dbReference>
<dbReference type="DrugBank" id="DB00756">
    <property type="generic name" value="Hexachlorophene"/>
</dbReference>
<dbReference type="DrugBank" id="DB08689">
    <property type="generic name" value="Ubiquinone Q1"/>
</dbReference>
<dbReference type="TCDB" id="3.D.10.1.7">
    <property type="family name" value="the prokaryotic succinate dehydrogenase (sdh) family"/>
</dbReference>
<dbReference type="GlyGen" id="O14521">
    <property type="glycosylation" value="1 site, 1 O-linked glycan (1 site)"/>
</dbReference>
<dbReference type="iPTMnet" id="O14521"/>
<dbReference type="SwissPalm" id="O14521"/>
<dbReference type="BioMuta" id="SDHD"/>
<dbReference type="jPOST" id="O14521"/>
<dbReference type="MassIVE" id="O14521"/>
<dbReference type="PaxDb" id="9606-ENSP00000364699"/>
<dbReference type="PeptideAtlas" id="O14521"/>
<dbReference type="ProteomicsDB" id="20759"/>
<dbReference type="ProteomicsDB" id="20802"/>
<dbReference type="ProteomicsDB" id="48064">
    <molecule id="O14521-1"/>
</dbReference>
<dbReference type="Pumba" id="O14521"/>
<dbReference type="TopDownProteomics" id="O14521-1">
    <molecule id="O14521-1"/>
</dbReference>
<dbReference type="Antibodypedia" id="32123">
    <property type="antibodies" value="139 antibodies from 29 providers"/>
</dbReference>
<dbReference type="DNASU" id="6392"/>
<dbReference type="Ensembl" id="ENST00000375549.8">
    <molecule id="O14521-1"/>
    <property type="protein sequence ID" value="ENSP00000364699.3"/>
    <property type="gene ID" value="ENSG00000204370.14"/>
</dbReference>
<dbReference type="Ensembl" id="ENST00000525291.5">
    <molecule id="O14521-2"/>
    <property type="protein sequence ID" value="ENSP00000436669.1"/>
    <property type="gene ID" value="ENSG00000204370.14"/>
</dbReference>
<dbReference type="Ensembl" id="ENST00000526592.5">
    <molecule id="O14521-4"/>
    <property type="protein sequence ID" value="ENSP00000432005.1"/>
    <property type="gene ID" value="ENSG00000204370.14"/>
</dbReference>
<dbReference type="Ensembl" id="ENST00000528048.5">
    <molecule id="O14521-3"/>
    <property type="protein sequence ID" value="ENSP00000436217.1"/>
    <property type="gene ID" value="ENSG00000204370.14"/>
</dbReference>
<dbReference type="GeneID" id="6392"/>
<dbReference type="KEGG" id="hsa:6392"/>
<dbReference type="MANE-Select" id="ENST00000375549.8">
    <property type="protein sequence ID" value="ENSP00000364699.3"/>
    <property type="RefSeq nucleotide sequence ID" value="NM_003002.4"/>
    <property type="RefSeq protein sequence ID" value="NP_002993.1"/>
</dbReference>
<dbReference type="UCSC" id="uc001pmz.5">
    <molecule id="O14521-1"/>
    <property type="organism name" value="human"/>
</dbReference>
<dbReference type="AGR" id="HGNC:10683"/>
<dbReference type="CTD" id="6392"/>
<dbReference type="DisGeNET" id="6392"/>
<dbReference type="GeneCards" id="SDHD"/>
<dbReference type="GeneReviews" id="SDHD"/>
<dbReference type="HGNC" id="HGNC:10683">
    <property type="gene designation" value="SDHD"/>
</dbReference>
<dbReference type="HPA" id="ENSG00000204370">
    <property type="expression patterns" value="Low tissue specificity"/>
</dbReference>
<dbReference type="MalaCards" id="SDHD"/>
<dbReference type="MIM" id="168000">
    <property type="type" value="phenotype"/>
</dbReference>
<dbReference type="MIM" id="602690">
    <property type="type" value="gene"/>
</dbReference>
<dbReference type="MIM" id="606864">
    <property type="type" value="phenotype"/>
</dbReference>
<dbReference type="MIM" id="619167">
    <property type="type" value="phenotype"/>
</dbReference>
<dbReference type="neXtProt" id="NX_O14521"/>
<dbReference type="OpenTargets" id="ENSG00000204370"/>
<dbReference type="Orphanet" id="100093">
    <property type="disease" value="Carcinoid syndrome"/>
</dbReference>
<dbReference type="Orphanet" id="97286">
    <property type="disease" value="Carney-Stratakis syndrome"/>
</dbReference>
<dbReference type="Orphanet" id="201">
    <property type="disease" value="Cowden syndrome"/>
</dbReference>
<dbReference type="Orphanet" id="29072">
    <property type="disease" value="Hereditary pheochromocytoma-paraganglioma"/>
</dbReference>
<dbReference type="Orphanet" id="3208">
    <property type="disease" value="Isolated succinate-CoQ reductase deficiency"/>
</dbReference>
<dbReference type="Orphanet" id="276621">
    <property type="disease" value="Sporadic pheochromocytoma/secreting paraganglioma"/>
</dbReference>
<dbReference type="PharmGKB" id="PA35608"/>
<dbReference type="VEuPathDB" id="HostDB:ENSG00000204370"/>
<dbReference type="eggNOG" id="KOG4097">
    <property type="taxonomic scope" value="Eukaryota"/>
</dbReference>
<dbReference type="GeneTree" id="ENSGT00390000010003"/>
<dbReference type="HOGENOM" id="CLU_2512011_0_0_1"/>
<dbReference type="InParanoid" id="O14521"/>
<dbReference type="OMA" id="VMHQHWG"/>
<dbReference type="OrthoDB" id="18577at2759"/>
<dbReference type="PAN-GO" id="O14521">
    <property type="GO annotations" value="5 GO annotations based on evolutionary models"/>
</dbReference>
<dbReference type="PhylomeDB" id="O14521"/>
<dbReference type="TreeFam" id="TF313310"/>
<dbReference type="BioCyc" id="MetaCyc:ENSG00000150781-MONOMER"/>
<dbReference type="PathwayCommons" id="O14521"/>
<dbReference type="Reactome" id="R-HSA-611105">
    <property type="pathway name" value="Respiratory electron transport"/>
</dbReference>
<dbReference type="Reactome" id="R-HSA-71403">
    <property type="pathway name" value="Citric acid cycle (TCA cycle)"/>
</dbReference>
<dbReference type="Reactome" id="R-HSA-9854311">
    <property type="pathway name" value="Maturation of TCA enzymes and regulation of TCA cycle"/>
</dbReference>
<dbReference type="SignaLink" id="O14521"/>
<dbReference type="SIGNOR" id="O14521"/>
<dbReference type="UniPathway" id="UPA00223"/>
<dbReference type="BioGRID-ORCS" id="6392">
    <property type="hits" value="521 hits in 1170 CRISPR screens"/>
</dbReference>
<dbReference type="ChiTaRS" id="SDHD">
    <property type="organism name" value="human"/>
</dbReference>
<dbReference type="GeneWiki" id="SDHD"/>
<dbReference type="GenomeRNAi" id="6392"/>
<dbReference type="Pharos" id="O14521">
    <property type="development level" value="Tbio"/>
</dbReference>
<dbReference type="PRO" id="PR:O14521"/>
<dbReference type="Proteomes" id="UP000005640">
    <property type="component" value="Chromosome 11"/>
</dbReference>
<dbReference type="RNAct" id="O14521">
    <property type="molecule type" value="protein"/>
</dbReference>
<dbReference type="Bgee" id="ENSG00000204370">
    <property type="expression patterns" value="Expressed in jejunal mucosa and 203 other cell types or tissues"/>
</dbReference>
<dbReference type="ExpressionAtlas" id="O14521">
    <property type="expression patterns" value="baseline and differential"/>
</dbReference>
<dbReference type="GO" id="GO:0005740">
    <property type="term" value="C:mitochondrial envelope"/>
    <property type="evidence" value="ECO:0000304"/>
    <property type="project" value="ProtInc"/>
</dbReference>
<dbReference type="GO" id="GO:0005743">
    <property type="term" value="C:mitochondrial inner membrane"/>
    <property type="evidence" value="ECO:0000314"/>
    <property type="project" value="UniProtKB"/>
</dbReference>
<dbReference type="GO" id="GO:0005739">
    <property type="term" value="C:mitochondrion"/>
    <property type="evidence" value="ECO:0006056"/>
    <property type="project" value="FlyBase"/>
</dbReference>
<dbReference type="GO" id="GO:0045273">
    <property type="term" value="C:respiratory chain complex II (succinate dehydrogenase)"/>
    <property type="evidence" value="ECO:0000314"/>
    <property type="project" value="UniProtKB"/>
</dbReference>
<dbReference type="GO" id="GO:0009055">
    <property type="term" value="F:electron transfer activity"/>
    <property type="evidence" value="ECO:0000304"/>
    <property type="project" value="UniProtKB"/>
</dbReference>
<dbReference type="GO" id="GO:0020037">
    <property type="term" value="F:heme binding"/>
    <property type="evidence" value="ECO:0000250"/>
    <property type="project" value="UniProtKB"/>
</dbReference>
<dbReference type="GO" id="GO:0046872">
    <property type="term" value="F:metal ion binding"/>
    <property type="evidence" value="ECO:0007669"/>
    <property type="project" value="UniProtKB-KW"/>
</dbReference>
<dbReference type="GO" id="GO:0008177">
    <property type="term" value="F:succinate dehydrogenase (quinone) activity"/>
    <property type="evidence" value="ECO:0007669"/>
    <property type="project" value="Ensembl"/>
</dbReference>
<dbReference type="GO" id="GO:0048039">
    <property type="term" value="F:ubiquinone binding"/>
    <property type="evidence" value="ECO:0000250"/>
    <property type="project" value="UniProtKB"/>
</dbReference>
<dbReference type="GO" id="GO:0071456">
    <property type="term" value="P:cellular response to hypoxia"/>
    <property type="evidence" value="ECO:0007669"/>
    <property type="project" value="Ensembl"/>
</dbReference>
<dbReference type="GO" id="GO:0006121">
    <property type="term" value="P:mitochondrial electron transport, succinate to ubiquinone"/>
    <property type="evidence" value="ECO:0000318"/>
    <property type="project" value="GO_Central"/>
</dbReference>
<dbReference type="GO" id="GO:0042776">
    <property type="term" value="P:proton motive force-driven mitochondrial ATP synthesis"/>
    <property type="evidence" value="ECO:0000303"/>
    <property type="project" value="ComplexPortal"/>
</dbReference>
<dbReference type="GO" id="GO:0050433">
    <property type="term" value="P:regulation of catecholamine secretion"/>
    <property type="evidence" value="ECO:0007669"/>
    <property type="project" value="Ensembl"/>
</dbReference>
<dbReference type="GO" id="GO:0006099">
    <property type="term" value="P:tricarboxylic acid cycle"/>
    <property type="evidence" value="ECO:0000314"/>
    <property type="project" value="UniProtKB"/>
</dbReference>
<dbReference type="CDD" id="cd03496">
    <property type="entry name" value="SQR_TypeC_CybS"/>
    <property type="match status" value="1"/>
</dbReference>
<dbReference type="FunFam" id="1.20.1300.10:FF:000009">
    <property type="entry name" value="Succinate dehydrogenase [ubiquinone] cytochrome b small subunit, mitochondrial"/>
    <property type="match status" value="1"/>
</dbReference>
<dbReference type="Gene3D" id="1.20.1300.10">
    <property type="entry name" value="Fumarate reductase/succinate dehydrogenase, transmembrane subunit"/>
    <property type="match status" value="1"/>
</dbReference>
<dbReference type="InterPro" id="IPR007992">
    <property type="entry name" value="CybS"/>
</dbReference>
<dbReference type="InterPro" id="IPR034804">
    <property type="entry name" value="SQR/QFR_C/D"/>
</dbReference>
<dbReference type="PANTHER" id="PTHR13337">
    <property type="entry name" value="SUCCINATE DEHYDROGENASE"/>
    <property type="match status" value="1"/>
</dbReference>
<dbReference type="PANTHER" id="PTHR13337:SF6">
    <property type="entry name" value="SUCCINATE DEHYDROGENASE [UBIQUINONE] CYTOCHROME B SMALL SUBUNIT, MITOCHONDRIAL"/>
    <property type="match status" value="1"/>
</dbReference>
<dbReference type="Pfam" id="PF05328">
    <property type="entry name" value="CybS"/>
    <property type="match status" value="1"/>
</dbReference>
<dbReference type="SUPFAM" id="SSF81343">
    <property type="entry name" value="Fumarate reductase respiratory complex transmembrane subunits"/>
    <property type="match status" value="1"/>
</dbReference>
<protein>
    <recommendedName>
        <fullName>Succinate dehydrogenase [ubiquinone] cytochrome b small subunit, mitochondrial</fullName>
        <shortName>CybS</shortName>
    </recommendedName>
    <alternativeName>
        <fullName>CII-4</fullName>
    </alternativeName>
    <alternativeName>
        <fullName>Malate dehydrogenase [quinone] cytochrome b small subunit</fullName>
    </alternativeName>
    <alternativeName>
        <fullName>QPs3</fullName>
    </alternativeName>
    <alternativeName>
        <fullName>Succinate dehydrogenase complex subunit D</fullName>
    </alternativeName>
    <alternativeName>
        <fullName>Succinate-ubiquinone oxidoreductase cytochrome b small subunit</fullName>
    </alternativeName>
    <alternativeName>
        <fullName>Succinate-ubiquinone reductase membrane anchor subunit</fullName>
    </alternativeName>
</protein>
<keyword id="KW-0002">3D-structure</keyword>
<keyword id="KW-0025">Alternative splicing</keyword>
<keyword id="KW-0225">Disease variant</keyword>
<keyword id="KW-0249">Electron transport</keyword>
<keyword id="KW-0349">Heme</keyword>
<keyword id="KW-0408">Iron</keyword>
<keyword id="KW-0472">Membrane</keyword>
<keyword id="KW-0479">Metal-binding</keyword>
<keyword id="KW-0496">Mitochondrion</keyword>
<keyword id="KW-0999">Mitochondrion inner membrane</keyword>
<keyword id="KW-1274">Primary mitochondrial disease</keyword>
<keyword id="KW-1267">Proteomics identification</keyword>
<keyword id="KW-1185">Reference proteome</keyword>
<keyword id="KW-0809">Transit peptide</keyword>
<keyword id="KW-0812">Transmembrane</keyword>
<keyword id="KW-1133">Transmembrane helix</keyword>
<keyword id="KW-0813">Transport</keyword>
<keyword id="KW-0816">Tricarboxylic acid cycle</keyword>
<sequence>MAVLWRLSAVCGALGGRALLLRTPVVRPAHISAFLQDRPIPEWCGVQHIHLSPSHHSGSKAASLHWTSERVVSVLLLGLLPAAYLNPCSAMDYSLAAALTLHGHWGLGQVVTDYVHGDALQKAAKAGLLALSALTFAGLCYFNYHDVGICKAVAMLWKL</sequence>
<evidence type="ECO:0000250" key="1">
    <source>
        <dbReference type="UniProtKB" id="Q95123"/>
    </source>
</evidence>
<evidence type="ECO:0000255" key="2"/>
<evidence type="ECO:0000269" key="3">
    <source>
    </source>
</evidence>
<evidence type="ECO:0000269" key="4">
    <source>
    </source>
</evidence>
<evidence type="ECO:0000269" key="5">
    <source>
    </source>
</evidence>
<evidence type="ECO:0000269" key="6">
    <source>
    </source>
</evidence>
<evidence type="ECO:0000269" key="7">
    <source>
    </source>
</evidence>
<evidence type="ECO:0000269" key="8">
    <source>
    </source>
</evidence>
<evidence type="ECO:0000269" key="9">
    <source>
    </source>
</evidence>
<evidence type="ECO:0000269" key="10">
    <source>
    </source>
</evidence>
<evidence type="ECO:0000269" key="11">
    <source>
    </source>
</evidence>
<evidence type="ECO:0000269" key="12">
    <source>
    </source>
</evidence>
<evidence type="ECO:0000269" key="13">
    <source>
    </source>
</evidence>
<evidence type="ECO:0000269" key="14">
    <source>
    </source>
</evidence>
<evidence type="ECO:0000269" key="15">
    <source>
    </source>
</evidence>
<evidence type="ECO:0000269" key="16">
    <source>
    </source>
</evidence>
<evidence type="ECO:0000269" key="17">
    <source>
    </source>
</evidence>
<evidence type="ECO:0000269" key="18">
    <source>
    </source>
</evidence>
<evidence type="ECO:0000269" key="19">
    <source>
    </source>
</evidence>
<evidence type="ECO:0000269" key="20">
    <source>
    </source>
</evidence>
<evidence type="ECO:0000269" key="21">
    <source>
    </source>
</evidence>
<evidence type="ECO:0000269" key="22">
    <source>
    </source>
</evidence>
<evidence type="ECO:0000305" key="23"/>
<evidence type="ECO:0007744" key="24">
    <source>
        <dbReference type="PDB" id="8GS8"/>
    </source>
</evidence>
<evidence type="ECO:0007829" key="25">
    <source>
        <dbReference type="PDB" id="8GS8"/>
    </source>
</evidence>
<accession>O14521</accession>
<accession>A6ND90</accession>
<accession>B3KQQ8</accession>
<accession>E9PIC0</accession>
<accession>E9PIG3</accession>
<accession>E9PQI9</accession>
<accession>Q53XW5</accession>
<accession>Q6IRW2</accession>
<feature type="transit peptide" description="Mitochondrion" evidence="2">
    <location>
        <begin position="1"/>
        <end position="56"/>
    </location>
</feature>
<feature type="chain" id="PRO_0000006487" description="Succinate dehydrogenase [ubiquinone] cytochrome b small subunit, mitochondrial">
    <location>
        <begin position="57"/>
        <end position="159"/>
    </location>
</feature>
<feature type="topological domain" description="Mitochondrial matrix" evidence="21 24">
    <location>
        <begin position="57"/>
        <end position="63"/>
    </location>
</feature>
<feature type="transmembrane region" description="Helical" evidence="21 24">
    <location>
        <begin position="64"/>
        <end position="85"/>
    </location>
</feature>
<feature type="topological domain" description="Mitochondrial intermembrane" evidence="21 24">
    <location>
        <begin position="86"/>
        <end position="90"/>
    </location>
</feature>
<feature type="transmembrane region" description="Helical" evidence="21 24">
    <location>
        <begin position="91"/>
        <end position="111"/>
    </location>
</feature>
<feature type="topological domain" description="Mitochondrial matrix" evidence="21 24">
    <location>
        <begin position="112"/>
        <end position="122"/>
    </location>
</feature>
<feature type="transmembrane region" description="Helical" evidence="21 24">
    <location>
        <begin position="123"/>
        <end position="144"/>
    </location>
</feature>
<feature type="topological domain" description="Mitochondrial intermembrane" evidence="21 24">
    <location>
        <begin position="145"/>
        <end position="159"/>
    </location>
</feature>
<feature type="binding site" description="axial binding residue" evidence="21 24">
    <location>
        <position position="102"/>
    </location>
    <ligand>
        <name>heme b</name>
        <dbReference type="ChEBI" id="CHEBI:60344"/>
        <note>ligand shared with SDHC</note>
    </ligand>
    <ligandPart>
        <name>Fe</name>
        <dbReference type="ChEBI" id="CHEBI:18248"/>
    </ligandPart>
</feature>
<feature type="binding site" evidence="21 24">
    <location>
        <position position="114"/>
    </location>
    <ligand>
        <name>a ubiquinone</name>
        <dbReference type="ChEBI" id="CHEBI:16389"/>
        <note>ligand shared with IP/SDHB</note>
    </ligand>
</feature>
<feature type="splice variant" id="VSP_054744" description="In isoform 2." evidence="23">
    <location>
        <begin position="19"/>
        <end position="57"/>
    </location>
</feature>
<feature type="splice variant" id="VSP_054745" description="In isoform 3." evidence="23">
    <original>HSGSKAASLHWTSERVVSVLLLGLLPAAYLNPCSAMDYSLAAALTLHGHWGLGQVVTDYVHGDALQKAAKAGLLALSALTFAGLCYFNYHDVGICKAVAMLWK</original>
    <variation>HWALDKLLLTMFMGMPCRKLPRQGFWHFQ</variation>
    <location>
        <begin position="56"/>
        <end position="158"/>
    </location>
</feature>
<feature type="splice variant" id="VSP_054746" description="In isoform 4." evidence="23">
    <original>GLGQVVTDYVHGDALQKAAKAGLLALSALTFAGLCYFN</original>
    <variation>LECNGAILARHDLGSARSQLTATSAFRVQAILLPQPPK</variation>
    <location>
        <begin position="106"/>
        <end position="143"/>
    </location>
</feature>
<feature type="splice variant" id="VSP_054747" description="In isoform 4." evidence="23">
    <location>
        <begin position="144"/>
        <end position="159"/>
    </location>
</feature>
<feature type="sequence variant" id="VAR_017870" description="Probable risk factor for pheochromocytoma, paraganglioma, intestinal carcinoid tumor and breast, renal and uterus carcinoma; increased manganese superoxide dismutase expression and increased reactive oxygen species; results in 1.9-fold increase in both AKT and MAPK expression; dbSNP:rs34677591." evidence="9 11 12 13 14 17 18">
    <original>G</original>
    <variation>S</variation>
    <location>
        <position position="12"/>
    </location>
</feature>
<feature type="sequence variant" id="VAR_017871" description="Probable risk factor for paraganglioma, breast and thyroid carcinoma; may be involved in somatic Merkel cell carcinoma; increased manganese superoxide dismutase expression and increased reactive oxygen species; results in a 2.0-fold increase in AKT expression and a 1.7-fold increase in MAPK expression; dbSNP:rs11214077." evidence="11 12 13 17">
    <original>H</original>
    <variation>R</variation>
    <location>
        <position position="50"/>
    </location>
</feature>
<feature type="sequence variant" id="VAR_074105" description="In MC2DN3; results in impaired mitochondrial complex II assembly; results in impaired cellular respiration; dbSNP:rs202198133." evidence="19">
    <original>E</original>
    <variation>K</variation>
    <location>
        <position position="69"/>
    </location>
</feature>
<feature type="sequence variant" id="VAR_010038" description="In PPGL1; dbSNP:rs80338844." evidence="4 5 15">
    <original>P</original>
    <variation>L</variation>
    <location>
        <position position="81"/>
    </location>
</feature>
<feature type="sequence variant" id="VAR_074106" description="In MC2DN3; results in highly reduced protein expression; results in impaired cellular respiration; dbSNP:rs786205436." evidence="20">
    <original>D</original>
    <variation>G</variation>
    <location>
        <position position="92"/>
    </location>
</feature>
<feature type="sequence variant" id="VAR_010039" description="In PPGL1; dbSNP:rs80338845." evidence="4 8 10 15">
    <original>D</original>
    <variation>Y</variation>
    <location>
        <position position="92"/>
    </location>
</feature>
<feature type="sequence variant" id="VAR_018519" description="In PPGL1; dbSNP:rs121908983." evidence="7">
    <location>
        <position position="93"/>
    </location>
</feature>
<feature type="sequence variant" id="VAR_010040" description="In PPGL1; dbSNP:rs104894302." evidence="4">
    <original>H</original>
    <variation>L</variation>
    <location>
        <position position="102"/>
    </location>
</feature>
<feature type="sequence variant" id="VAR_017872" description="In PPGL1; dbSNP:rs104894304." evidence="6 15">
    <original>Y</original>
    <variation>C</variation>
    <location>
        <position position="114"/>
    </location>
</feature>
<feature type="sequence variant" id="VAR_017873" description="In PPGL1; dbSNP:rs80338847." evidence="8">
    <original>L</original>
    <variation>P</variation>
    <location>
        <position position="139"/>
    </location>
</feature>
<feature type="sequence variant" id="VAR_054384" description="Found in an individual with features of Cowden syndrome; uncertain significance; increased manganese superoxide dismutase expression and normal reactive oxygen species; no change in AKT expression but a 1.2-fold increase of MAPK expression; dbSNP:rs121908984." evidence="17">
    <original>H</original>
    <variation>N</variation>
    <location>
        <position position="145"/>
    </location>
</feature>
<feature type="sequence variant" id="VAR_054385" description="In PPGL1; dbSNP:rs1555187633." evidence="15">
    <original>G</original>
    <variation>V</variation>
    <location>
        <position position="148"/>
    </location>
</feature>
<feature type="sequence conflict" description="In Ref. 8; AAH70307." evidence="23" ref="8">
    <original>V</original>
    <variation>F</variation>
    <location>
        <position position="74"/>
    </location>
</feature>
<feature type="helix" evidence="25">
    <location>
        <begin position="63"/>
        <end position="79"/>
    </location>
</feature>
<feature type="helix" evidence="25">
    <location>
        <begin position="81"/>
        <end position="85"/>
    </location>
</feature>
<feature type="helix" evidence="25">
    <location>
        <begin position="89"/>
        <end position="114"/>
    </location>
</feature>
<feature type="helix" evidence="25">
    <location>
        <begin position="118"/>
        <end position="145"/>
    </location>
</feature>
<feature type="helix" evidence="25">
    <location>
        <begin position="148"/>
        <end position="156"/>
    </location>
</feature>
<reference key="1">
    <citation type="journal article" date="1997" name="Cytogenet. Cell Genet.">
        <title>Cytochrome b in human complex II (succinate-ubiquinone oxidoreductase): cDNA cloning of the components in liver mitochondria and chromosome assignment of the genes for the large (SDHC) and small (SDHD) subunits to 1q21 and 11q23.</title>
        <authorList>
            <person name="Hirawake H."/>
            <person name="Taniwaki M."/>
            <person name="Tamura A."/>
            <person name="Kojima S."/>
            <person name="Kita K."/>
        </authorList>
    </citation>
    <scope>NUCLEOTIDE SEQUENCE [MRNA] (ISOFORM 1)</scope>
    <scope>FUNCTION</scope>
    <scope>PATHWAY</scope>
    <scope>SUBCELLULAR LOCATION</scope>
    <source>
        <tissue>Liver</tissue>
    </source>
</reference>
<reference key="2">
    <citation type="journal article" date="1999" name="Biochim. Biophys. Acta">
        <title>Characterization of the human SDHD gene encoding the small subunit of cytochrome b (cybS) in mitochondrial succinate-ubiquinone oxidoreductase.</title>
        <authorList>
            <person name="Hirawake H."/>
            <person name="Taniwaki M."/>
            <person name="Tamura A."/>
            <person name="Amino H."/>
            <person name="Tomitsuka E."/>
            <person name="Kita K."/>
        </authorList>
    </citation>
    <scope>NUCLEOTIDE SEQUENCE [GENOMIC DNA]</scope>
    <scope>FUNCTION</scope>
    <scope>PATHWAY</scope>
</reference>
<reference key="3">
    <citation type="journal article" date="2005" name="DNA Res.">
        <title>Signal sequence and keyword trap in silico for selection of full-length human cDNAs encoding secretion or membrane proteins from oligo-capped cDNA libraries.</title>
        <authorList>
            <person name="Otsuki T."/>
            <person name="Ota T."/>
            <person name="Nishikawa T."/>
            <person name="Hayashi K."/>
            <person name="Suzuki Y."/>
            <person name="Yamamoto J."/>
            <person name="Wakamatsu A."/>
            <person name="Kimura K."/>
            <person name="Sakamoto K."/>
            <person name="Hatano N."/>
            <person name="Kawai Y."/>
            <person name="Ishii S."/>
            <person name="Saito K."/>
            <person name="Kojima S."/>
            <person name="Sugiyama T."/>
            <person name="Ono T."/>
            <person name="Okano K."/>
            <person name="Yoshikawa Y."/>
            <person name="Aotsuka S."/>
            <person name="Sasaki N."/>
            <person name="Hattori A."/>
            <person name="Okumura K."/>
            <person name="Nagai K."/>
            <person name="Sugano S."/>
            <person name="Isogai T."/>
        </authorList>
    </citation>
    <scope>NUCLEOTIDE SEQUENCE [LARGE SCALE MRNA] (ISOFORM 1)</scope>
</reference>
<reference key="4">
    <citation type="submission" date="2003-05" db="EMBL/GenBank/DDBJ databases">
        <title>Cloning of human full-length CDSs in BD Creator(TM) system donor vector.</title>
        <authorList>
            <person name="Kalnine N."/>
            <person name="Chen X."/>
            <person name="Rolfs A."/>
            <person name="Halleck A."/>
            <person name="Hines L."/>
            <person name="Eisenstein S."/>
            <person name="Koundinya M."/>
            <person name="Raphael J."/>
            <person name="Moreira D."/>
            <person name="Kelley T."/>
            <person name="LaBaer J."/>
            <person name="Lin Y."/>
            <person name="Phelan M."/>
            <person name="Farmer A."/>
        </authorList>
    </citation>
    <scope>NUCLEOTIDE SEQUENCE [LARGE SCALE MRNA] (ISOFORM 1)</scope>
</reference>
<reference key="5">
    <citation type="submission" date="2004-06" db="EMBL/GenBank/DDBJ databases">
        <title>Cloning of human full open reading frames in Gateway(TM) system entry vector (pDONR201).</title>
        <authorList>
            <person name="Ebert L."/>
            <person name="Schick M."/>
            <person name="Neubert P."/>
            <person name="Schatten R."/>
            <person name="Henze S."/>
            <person name="Korn B."/>
        </authorList>
    </citation>
    <scope>NUCLEOTIDE SEQUENCE [LARGE SCALE MRNA] (ISOFORM 1)</scope>
</reference>
<reference key="6">
    <citation type="journal article" date="2006" name="Nature">
        <title>Human chromosome 11 DNA sequence and analysis including novel gene identification.</title>
        <authorList>
            <person name="Taylor T.D."/>
            <person name="Noguchi H."/>
            <person name="Totoki Y."/>
            <person name="Toyoda A."/>
            <person name="Kuroki Y."/>
            <person name="Dewar K."/>
            <person name="Lloyd C."/>
            <person name="Itoh T."/>
            <person name="Takeda T."/>
            <person name="Kim D.-W."/>
            <person name="She X."/>
            <person name="Barlow K.F."/>
            <person name="Bloom T."/>
            <person name="Bruford E."/>
            <person name="Chang J.L."/>
            <person name="Cuomo C.A."/>
            <person name="Eichler E."/>
            <person name="FitzGerald M.G."/>
            <person name="Jaffe D.B."/>
            <person name="LaButti K."/>
            <person name="Nicol R."/>
            <person name="Park H.-S."/>
            <person name="Seaman C."/>
            <person name="Sougnez C."/>
            <person name="Yang X."/>
            <person name="Zimmer A.R."/>
            <person name="Zody M.C."/>
            <person name="Birren B.W."/>
            <person name="Nusbaum C."/>
            <person name="Fujiyama A."/>
            <person name="Hattori M."/>
            <person name="Rogers J."/>
            <person name="Lander E.S."/>
            <person name="Sakaki Y."/>
        </authorList>
    </citation>
    <scope>NUCLEOTIDE SEQUENCE [LARGE SCALE GENOMIC DNA]</scope>
</reference>
<reference key="7">
    <citation type="submission" date="2005-07" db="EMBL/GenBank/DDBJ databases">
        <authorList>
            <person name="Mural R.J."/>
            <person name="Istrail S."/>
            <person name="Sutton G.G."/>
            <person name="Florea L."/>
            <person name="Halpern A.L."/>
            <person name="Mobarry C.M."/>
            <person name="Lippert R."/>
            <person name="Walenz B."/>
            <person name="Shatkay H."/>
            <person name="Dew I."/>
            <person name="Miller J.R."/>
            <person name="Flanigan M.J."/>
            <person name="Edwards N.J."/>
            <person name="Bolanos R."/>
            <person name="Fasulo D."/>
            <person name="Halldorsson B.V."/>
            <person name="Hannenhalli S."/>
            <person name="Turner R."/>
            <person name="Yooseph S."/>
            <person name="Lu F."/>
            <person name="Nusskern D.R."/>
            <person name="Shue B.C."/>
            <person name="Zheng X.H."/>
            <person name="Zhong F."/>
            <person name="Delcher A.L."/>
            <person name="Huson D.H."/>
            <person name="Kravitz S.A."/>
            <person name="Mouchard L."/>
            <person name="Reinert K."/>
            <person name="Remington K.A."/>
            <person name="Clark A.G."/>
            <person name="Waterman M.S."/>
            <person name="Eichler E.E."/>
            <person name="Adams M.D."/>
            <person name="Hunkapiller M.W."/>
            <person name="Myers E.W."/>
            <person name="Venter J.C."/>
        </authorList>
    </citation>
    <scope>NUCLEOTIDE SEQUENCE [LARGE SCALE GENOMIC DNA]</scope>
</reference>
<reference key="8">
    <citation type="journal article" date="2004" name="Genome Res.">
        <title>The status, quality, and expansion of the NIH full-length cDNA project: the Mammalian Gene Collection (MGC).</title>
        <authorList>
            <consortium name="The MGC Project Team"/>
        </authorList>
    </citation>
    <scope>NUCLEOTIDE SEQUENCE [LARGE SCALE MRNA] (ISOFORM 1)</scope>
    <source>
        <tissue>Bone marrow</tissue>
        <tissue>Brain</tissue>
        <tissue>Lung</tissue>
        <tissue>Skeletal muscle</tissue>
    </source>
</reference>
<reference key="9">
    <citation type="journal article" date="2011" name="BMC Syst. Biol.">
        <title>Initial characterization of the human central proteome.</title>
        <authorList>
            <person name="Burkard T.R."/>
            <person name="Planyavsky M."/>
            <person name="Kaupe I."/>
            <person name="Breitwieser F.P."/>
            <person name="Buerckstuemmer T."/>
            <person name="Bennett K.L."/>
            <person name="Superti-Furga G."/>
            <person name="Colinge J."/>
        </authorList>
    </citation>
    <scope>IDENTIFICATION BY MASS SPECTROMETRY [LARGE SCALE ANALYSIS]</scope>
</reference>
<reference key="10">
    <citation type="journal article" date="2014" name="J. Proteomics">
        <title>An enzyme assisted RP-RPLC approach for in-depth analysis of human liver phosphoproteome.</title>
        <authorList>
            <person name="Bian Y."/>
            <person name="Song C."/>
            <person name="Cheng K."/>
            <person name="Dong M."/>
            <person name="Wang F."/>
            <person name="Huang J."/>
            <person name="Sun D."/>
            <person name="Wang L."/>
            <person name="Ye M."/>
            <person name="Zou H."/>
        </authorList>
    </citation>
    <scope>IDENTIFICATION BY MASS SPECTROMETRY [LARGE SCALE ANALYSIS]</scope>
    <source>
        <tissue>Liver</tissue>
    </source>
</reference>
<reference key="11">
    <citation type="journal article" date="2015" name="Proteomics">
        <title>N-terminome analysis of the human mitochondrial proteome.</title>
        <authorList>
            <person name="Vaca Jacome A.S."/>
            <person name="Rabilloud T."/>
            <person name="Schaeffer-Reiss C."/>
            <person name="Rompais M."/>
            <person name="Ayoub D."/>
            <person name="Lane L."/>
            <person name="Bairoch A."/>
            <person name="Van Dorsselaer A."/>
            <person name="Carapito C."/>
        </authorList>
    </citation>
    <scope>IDENTIFICATION BY MASS SPECTROMETRY [LARGE SCALE ANALYSIS]</scope>
</reference>
<reference evidence="24" key="12">
    <citation type="journal article" date="2023" name="Proc. Natl. Acad. Sci. U.S.A.">
        <title>Structure of the human respiratory complex II.</title>
        <authorList>
            <person name="Du Z."/>
            <person name="Zhou X."/>
            <person name="Lai Y."/>
            <person name="Xu J."/>
            <person name="Zhang Y."/>
            <person name="Zhou S."/>
            <person name="Feng Z."/>
            <person name="Yu L."/>
            <person name="Tang Y."/>
            <person name="Wang W."/>
            <person name="Yu L."/>
            <person name="Tian C."/>
            <person name="Ran T."/>
            <person name="Chen H."/>
            <person name="Guddat L.W."/>
            <person name="Liu F."/>
            <person name="Gao Y."/>
            <person name="Rao Z."/>
            <person name="Gong H."/>
        </authorList>
    </citation>
    <scope>STRUCTURE BY ELECTRON MICROSCOPY (2.86 ANGSTROMS) IN COMPLEXES WITH HEME AND UBIQUINONE</scope>
    <scope>SUBUNIT</scope>
    <scope>SUBCELLULAR LOCATION</scope>
</reference>
<reference key="13">
    <citation type="journal article" date="2000" name="Cancer Res.">
        <title>Somatic and occult germ-line mutations in SDHD, a mitochondrial complex II gene, in nonfamilial pheochromocytoma.</title>
        <authorList>
            <person name="Gimm O."/>
            <person name="Armanios M."/>
            <person name="Dziema H."/>
            <person name="Neumann H.P.H."/>
            <person name="Eng C."/>
        </authorList>
    </citation>
    <scope>VARIANT PPGL1 LEU-81</scope>
</reference>
<reference key="14">
    <citation type="journal article" date="2000" name="Science">
        <title>Mutations in SDHD, a mitochondrial complex II gene, in hereditary paraganglioma.</title>
        <authorList>
            <person name="Baysal B.E."/>
            <person name="Ferrell R.E."/>
            <person name="Willett-Brozick J.E."/>
            <person name="Lawrence E.C."/>
            <person name="Myssiorek D."/>
            <person name="Bosch A."/>
            <person name="van der Mey A."/>
            <person name="Taschner P.E.M."/>
            <person name="Rubinstein W.S."/>
            <person name="Myers E.N."/>
            <person name="Richard C.W. III"/>
            <person name="Cornelisse C.J."/>
            <person name="Devilee P."/>
            <person name="Devlin B."/>
        </authorList>
    </citation>
    <scope>VARIANTS PPGL1 LEU-81; TYR-92 AND LEU-102</scope>
</reference>
<reference key="15">
    <citation type="journal article" date="2001" name="Am. J. Med. Genet.">
        <title>Novel mutations and the emergence of a common mutation in the SDHD gene causing familial paraganglioma.</title>
        <authorList>
            <person name="Milunsky J.M."/>
            <person name="Maher T.A."/>
            <person name="Michels V.V."/>
            <person name="Milunsky A."/>
        </authorList>
    </citation>
    <scope>VARIANT PPGL1 CYS-114</scope>
</reference>
<reference key="16">
    <citation type="journal article" date="2001" name="Genes Chromosomes Cancer">
        <title>Novel mutations in the SDHD gene in pedigrees with familial carotid body paraganglioma and sensorineural hearing loss.</title>
        <authorList>
            <person name="Badenhop R.F."/>
            <person name="Cherian S."/>
            <person name="Lord R.S.A."/>
            <person name="Baysal B.E."/>
            <person name="Taschner P.E.M."/>
            <person name="Schofield P.R."/>
        </authorList>
    </citation>
    <scope>VARIANT PPGL1 TYR-93 DEL</scope>
</reference>
<reference key="17">
    <citation type="journal article" date="2001" name="Genes Chromosomes Cancer">
        <title>Nearly all hereditary paragangliomas in the Netherlands are caused by two founder mutations in the SDHD gene.</title>
        <authorList>
            <person name="Taschner P.E.M."/>
            <person name="Jansen J.C."/>
            <person name="Baysal B.E."/>
            <person name="Bosch A."/>
            <person name="Rosenberg E.H."/>
            <person name="Broecker-Vriends A.H.J.T."/>
            <person name="van Der Mey A.G.L."/>
            <person name="van Ommen G.-J.B."/>
            <person name="Cornelisse C.J."/>
            <person name="Devilee P."/>
        </authorList>
    </citation>
    <scope>VARIANTS PPGL1 TYR-92 AND PRO-139</scope>
</reference>
<reference key="18">
    <citation type="journal article" date="2001" name="Oncogene">
        <title>Germline SDHD mutation in paraganglioma of the spinal cord.</title>
        <authorList>
            <person name="Masuoka J."/>
            <person name="Brandner S."/>
            <person name="Paulus W."/>
            <person name="Soffer D."/>
            <person name="Vital A."/>
            <person name="Chimelli L."/>
            <person name="Jouvet A."/>
            <person name="Yonekawa Y."/>
            <person name="Kleihues P."/>
            <person name="Ohgaki H."/>
        </authorList>
    </citation>
    <scope>VARIANT SER-12</scope>
</reference>
<reference key="19">
    <citation type="journal article" date="2002" name="Genes Chromosomes Cancer">
        <title>Alterations of the SDHD gene locus in midgut carcinoids, Merkel cell carcinomas, pheochromocytomas, and abdominal paragangliomas.</title>
        <authorList>
            <person name="Kytoelae S."/>
            <person name="Nord B."/>
            <person name="Elder E.E."/>
            <person name="Carling T."/>
            <person name="Kjellman M."/>
            <person name="Cedermark B."/>
            <person name="Juhlin C."/>
            <person name="Hoeoeg A."/>
            <person name="Isola J."/>
            <person name="Larsson C."/>
        </authorList>
    </citation>
    <scope>VARIANTS SER-12 AND ARG-50</scope>
</reference>
<reference key="20">
    <citation type="journal article" date="2003" name="Cancer Res.">
        <title>Mutations in the SDHB gene are associated with extra-adrenal and/or malignant phaeochromocytomas.</title>
        <authorList>
            <person name="Gimenez-Roqueplo A.-P."/>
            <person name="Favier J."/>
            <person name="Rustin P."/>
            <person name="Rieubland C."/>
            <person name="Crespin M."/>
            <person name="Nau V."/>
            <person name="Khau Van Kien P."/>
            <person name="Corvol P."/>
            <person name="Plouin P.-F."/>
            <person name="Jeunemaitre X."/>
        </authorList>
    </citation>
    <scope>VARIANTS SER-12 AND ARG-50</scope>
</reference>
<reference key="21">
    <citation type="journal article" date="2002" name="N. Engl. J. Med.">
        <title>Germ-line mutations in nonsyndromic pheochromocytoma.</title>
        <authorList>
            <consortium name="The Freiburg-Warsaw-Columbus pheochromocytoma study group"/>
            <person name="Neumann H.P.H."/>
            <person name="Bausch B."/>
            <person name="McWhinney S.R."/>
            <person name="Bender B.U."/>
            <person name="Gimm O."/>
            <person name="Franke G."/>
            <person name="Schipper J."/>
            <person name="Klisch J."/>
            <person name="Altehoefer C."/>
            <person name="Zerres K."/>
            <person name="Januszewicz A."/>
            <person name="Smith W.M."/>
            <person name="Munk R."/>
            <person name="Manz T."/>
            <person name="Glaesker S."/>
            <person name="Apel T.W."/>
            <person name="Treier M."/>
            <person name="Reineke M."/>
            <person name="Walz M.K."/>
            <person name="Hoang-Vu C."/>
            <person name="Brauckhoff M."/>
            <person name="Klein-Franke A."/>
            <person name="Klose P."/>
            <person name="Schmidt H."/>
            <person name="Maier-Woelfle M."/>
            <person name="Peczkowska M."/>
            <person name="Szmigielski C."/>
            <person name="Eng C."/>
        </authorList>
    </citation>
    <scope>VARIANT PPGL1 TYR-92</scope>
</reference>
<reference key="22">
    <citation type="journal article" date="2003" name="Genes Chromosomes Cancer">
        <title>G12S and H50R variations are polymorphisms in the SDHD gene.</title>
        <authorList>
            <person name="Cascon A."/>
            <person name="Ruiz-Llorente S."/>
            <person name="Cebrian A."/>
            <person name="Leton R."/>
            <person name="Telleria D."/>
            <person name="Benitez J."/>
            <person name="Robledo M."/>
        </authorList>
    </citation>
    <scope>DISCUSSION OF PATHOGENIC ROLE OF VARIANTS SER-12 AND ARG-50</scope>
</reference>
<reference key="23">
    <citation type="journal article" date="2004" name="JAMA">
        <title>Distinct clinical features of paraganglioma syndromes associated with SDHB and SDHD gene mutations.</title>
        <authorList>
            <person name="Neumann H.P.H."/>
            <person name="Pawlu C."/>
            <person name="Peczkowska M."/>
            <person name="Bausch B."/>
            <person name="McWhinney S.R."/>
            <person name="Muresan M."/>
            <person name="Buchta M."/>
            <person name="Franke G."/>
            <person name="Klisch J."/>
            <person name="Bley T.A."/>
            <person name="Hoegerle S."/>
            <person name="Boedeker C.C."/>
            <person name="Opocher G."/>
            <person name="Schipper J."/>
            <person name="Januszewicz A."/>
            <person name="Eng C."/>
        </authorList>
    </citation>
    <scope>VARIANTS PPGL1 LEU-81; TYR-92; CYS-114 AND VAL-148</scope>
</reference>
<reference key="24">
    <citation type="journal article" date="2004" name="JAMA">
        <authorList>
            <person name="Neumann H.P.H."/>
            <person name="Pawlu C."/>
            <person name="Peczkowska M."/>
            <person name="Bausch B."/>
            <person name="McWhinney S.R."/>
            <person name="Muresan M."/>
            <person name="Buchta M."/>
            <person name="Franke G."/>
            <person name="Klisch J."/>
            <person name="Bley T.A."/>
            <person name="Hoegerle S."/>
            <person name="Boedeker C.C."/>
            <person name="Opocher G."/>
            <person name="Schipper J."/>
            <person name="Januszewicz A."/>
            <person name="Eng C."/>
        </authorList>
    </citation>
    <scope>ERRATUM OF PUBMED:15328326</scope>
</reference>
<reference key="25">
    <citation type="journal article" date="2004" name="Clin. Genet.">
        <title>SDHD mutation analysis in seven German patients with sporadic carotid body paraganglioma: one novel mutation, no Dutch founder mutation and further evidence that G12S is a polymorphism.</title>
        <authorList>
            <person name="Leube B."/>
            <person name="Huber R."/>
            <person name="Goecke T.O."/>
            <person name="Sandmann W."/>
            <person name="Royer-Pokora B."/>
        </authorList>
    </citation>
    <scope>VARIANT SER-12</scope>
</reference>
<reference key="26">
    <citation type="journal article" date="2007" name="N. Engl. J. Med.">
        <title>Familial gastrointestinal stromal tumors and germ-line mutations.</title>
        <authorList>
            <person name="McWhinney S.R."/>
            <person name="Pasini B."/>
            <person name="Stratakis C.A."/>
        </authorList>
    </citation>
    <scope>INVOLVEMENT IN PGGSS</scope>
</reference>
<reference key="27">
    <citation type="journal article" date="2008" name="Am. J. Hum. Genet.">
        <title>Germline mutations and variants in the succinate dehydrogenase genes in Cowden and Cowden-like syndromes.</title>
        <authorList>
            <person name="Ni Y."/>
            <person name="Zbuk K.M."/>
            <person name="Sadler T."/>
            <person name="Patocs A."/>
            <person name="Lobo G."/>
            <person name="Edelman E."/>
            <person name="Platzer P."/>
            <person name="Orloff M.S."/>
            <person name="Waite K.A."/>
            <person name="Eng C."/>
        </authorList>
    </citation>
    <scope>VARIANTS SER-12; ARG-50 AND ASN-145</scope>
    <scope>CHARACTERIZATION OF VARIANTS SER-12; ARG-50 AND ASN-145</scope>
</reference>
<reference key="28">
    <citation type="journal article" date="2008" name="Nature">
        <title>DNA sequencing of a cytogenetically normal acute myeloid leukaemia genome.</title>
        <authorList>
            <person name="Ley T.J."/>
            <person name="Mardis E.R."/>
            <person name="Ding L."/>
            <person name="Fulton B."/>
            <person name="McLellan M.D."/>
            <person name="Chen K."/>
            <person name="Dooling D."/>
            <person name="Dunford-Shore B.H."/>
            <person name="McGrath S."/>
            <person name="Hickenbotham M."/>
            <person name="Cook L."/>
            <person name="Abbott R."/>
            <person name="Larson D.E."/>
            <person name="Koboldt D.C."/>
            <person name="Pohl C."/>
            <person name="Smith S."/>
            <person name="Hawkins A."/>
            <person name="Abbott S."/>
            <person name="Locke D."/>
            <person name="Hillier L.W."/>
            <person name="Miner T."/>
            <person name="Fulton L."/>
            <person name="Magrini V."/>
            <person name="Wylie T."/>
            <person name="Glasscock J."/>
            <person name="Conyers J."/>
            <person name="Sander N."/>
            <person name="Shi X."/>
            <person name="Osborne J.R."/>
            <person name="Minx P."/>
            <person name="Gordon D."/>
            <person name="Chinwalla A."/>
            <person name="Zhao Y."/>
            <person name="Ries R.E."/>
            <person name="Payton J.E."/>
            <person name="Westervelt P."/>
            <person name="Tomasson M.H."/>
            <person name="Watson M."/>
            <person name="Baty J."/>
            <person name="Ivanovich J."/>
            <person name="Heath S."/>
            <person name="Shannon W.D."/>
            <person name="Nagarajan R."/>
            <person name="Walter M.J."/>
            <person name="Link D.C."/>
            <person name="Graubert T.A."/>
            <person name="DiPersio J.F."/>
            <person name="Wilson R.K."/>
        </authorList>
    </citation>
    <scope>VARIANT [LARGE SCALE ANALYSIS] SER-12</scope>
</reference>
<reference key="29">
    <citation type="journal article" date="2014" name="J. Med. Genet.">
        <title>Mutations in SDHD lead to autosomal recessive encephalomyopathy and isolated mitochondrial complex II deficiency.</title>
        <authorList>
            <person name="Jackson C.B."/>
            <person name="Nuoffer J.M."/>
            <person name="Hahn D."/>
            <person name="Prokisch H."/>
            <person name="Haberberger B."/>
            <person name="Gautschi M."/>
            <person name="Haeberli A."/>
            <person name="Gallati S."/>
            <person name="Schaller A."/>
        </authorList>
    </citation>
    <scope>VARIANT MC2DN3 LYS-69</scope>
    <scope>CHARACTERIZATION OF VARIANT MC2DN3 LYS-69</scope>
    <scope>INVOLVEMENT IN MC2DN3</scope>
</reference>
<reference key="30">
    <citation type="journal article" date="2015" name="Hum. Genet.">
        <title>A recessive homozygous p.Asp92Gly SDHD mutation causes prenatal cardiomyopathy and a severe mitochondrial complex II deficiency.</title>
        <authorList>
            <person name="Alston C.L."/>
            <person name="Ceccatelli Berti C."/>
            <person name="Blakely E.L."/>
            <person name="Olahova M."/>
            <person name="He L."/>
            <person name="McMahon C.J."/>
            <person name="Olpin S.E."/>
            <person name="Hargreaves I.P."/>
            <person name="Nolli C."/>
            <person name="McFarland R."/>
            <person name="Goffrini P."/>
            <person name="O'Sullivan M.J."/>
            <person name="Taylor R.W."/>
        </authorList>
    </citation>
    <scope>VARIANT MC2DN3 GLY-92</scope>
    <scope>INVOLVEMENT IN MC2DN3</scope>
    <scope>CHARACTERIZATION OF VARIANT MC2DN3 GLY-92</scope>
</reference>
<comment type="function">
    <text evidence="1 3 22">Membrane-anchoring subunit of succinate dehydrogenase (SDH) that is involved in complex II of the mitochondrial electron transport chain and is responsible for transferring electrons from succinate to ubiquinone (coenzyme Q) (PubMed:10482792, PubMed:9533030). SDH also oxidizes malate to the non-canonical enol form of oxaloacetate, enol-oxaloacetate (By similarity). Enol-oxaloacetate, which is a potent inhibitor of the succinate dehydrogenase activity, is further isomerized into keto-oxaloacetate (By similarity).</text>
</comment>
<comment type="pathway">
    <text evidence="3 22">Carbohydrate metabolism; tricarboxylic acid cycle.</text>
</comment>
<comment type="subunit">
    <text evidence="21">Component of complex II composed of four subunits: the flavoprotein (FP) SDHA, iron-sulfur protein (IP) SDHB, and a cytochrome b560 composed of SDHC and SDHD.</text>
</comment>
<comment type="interaction">
    <interactant intactId="EBI-1224553">
        <id>O14521</id>
    </interactant>
    <interactant intactId="EBI-17589229">
        <id>Q6NTF9-3</id>
        <label>RHBDD2</label>
    </interactant>
    <organismsDiffer>false</organismsDiffer>
    <experiments>3</experiments>
</comment>
<comment type="subcellular location">
    <subcellularLocation>
        <location evidence="21 22">Mitochondrion inner membrane</location>
        <topology evidence="2">Multi-pass membrane protein</topology>
    </subcellularLocation>
</comment>
<comment type="alternative products">
    <event type="alternative splicing"/>
    <isoform>
        <id>O14521-1</id>
        <name>1</name>
        <sequence type="displayed"/>
    </isoform>
    <isoform>
        <id>O14521-2</id>
        <name>2</name>
        <sequence type="described" ref="VSP_054744"/>
    </isoform>
    <isoform>
        <id>O14521-3</id>
        <name>3</name>
        <sequence type="described" ref="VSP_054745"/>
    </isoform>
    <isoform>
        <id>O14521-4</id>
        <name>4</name>
        <sequence type="described" ref="VSP_054746 VSP_054747"/>
    </isoform>
</comment>
<comment type="disease" evidence="4 5 6 7 8 10 15">
    <disease id="DI-01733">
        <name>Pheochromocytoma/paraganglioma syndrome 1</name>
        <acronym>PPGL1</acronym>
        <description>A form of pheochromocytoma/paraganglioma syndrome, a tumor predisposition syndrome characterized by the development of neuroendocrine tumors, usually in adulthood. Pheochromocytomas are catecholamine-producing tumors that arise from chromaffin cells in the adrenal medulla. Paragangliomas develop from sympathetic paraganglia in the thorax, abdomen, and pelvis, as well as from parasympathetic paraganglia in the head and neck. PPGL1 inheritance is autosomal dominant.</description>
        <dbReference type="MIM" id="168000"/>
    </disease>
    <text>The disease is caused by variants affecting the gene represented in this entry.</text>
</comment>
<comment type="disease" evidence="16">
    <disease id="DI-02128">
        <name>Paraganglioma and gastric stromal sarcoma</name>
        <acronym>PGGSS</acronym>
        <description>Gastrointestinal stromal tumors may be sporadic or inherited in an autosomal dominant manner, alone or as a component of a syndrome associated with other tumors, such as in the context of neurofibromatosis type 1 (NF1). Patients have both gastrointestinal stromal tumors and paragangliomas. Susceptibility to the tumors was inherited in an apparently autosomal dominant manner, with incomplete penetrance.</description>
        <dbReference type="MIM" id="606864"/>
    </disease>
    <text>The disease is caused by variants affecting the gene represented in this entry.</text>
</comment>
<comment type="disease" evidence="19 20">
    <disease id="DI-06015">
        <name>Mitochondrial complex II deficiency, nuclear type 3</name>
        <acronym>MC2DN3</acronym>
        <description>A form of mitochondrial complex II deficiency, a disorder with heterogeneous clinical manifestations. Some patients have multisystem involvement of the brain, heart, muscle, liver, and kidneys resulting in death in infancy, whereas others have only isolated cardiac or muscle involvement with onset in adulthood and normal cognition. Clinical features include psychomotor regression in infants, poor growth with lack of speech development, severe spastic quadriplegia, dystonia, progressive leukoencephalopathy, muscle weakness, exercise intolerance, cardiomyopathy. Some patients manifest Leigh syndrome or Kearns-Sayre syndrome. MC2DN3 inheritance is autosomal recessive.</description>
        <dbReference type="MIM" id="619167"/>
    </disease>
    <text>The disease is caused by variants affecting the gene represented in this entry.</text>
</comment>
<comment type="similarity">
    <text evidence="23">Belongs to the CybS family.</text>
</comment>
<comment type="online information" name="Atlas of Genetics and Cytogenetics in Oncology and Haematology">
    <link uri="https://atlasgeneticsoncology.org/gene/390/SDHD"/>
</comment>
<comment type="online information" name="Wikipedia">
    <link uri="https://en.wikipedia.org/wiki/SDHD"/>
    <text>SDHD entry</text>
</comment>
<comment type="online information" name="TCA Cycle Gene Mutation Database">
    <link uri="https://databases.lovd.nl/shared/genes/SDHD"/>
</comment>
<organism>
    <name type="scientific">Homo sapiens</name>
    <name type="common">Human</name>
    <dbReference type="NCBI Taxonomy" id="9606"/>
    <lineage>
        <taxon>Eukaryota</taxon>
        <taxon>Metazoa</taxon>
        <taxon>Chordata</taxon>
        <taxon>Craniata</taxon>
        <taxon>Vertebrata</taxon>
        <taxon>Euteleostomi</taxon>
        <taxon>Mammalia</taxon>
        <taxon>Eutheria</taxon>
        <taxon>Euarchontoglires</taxon>
        <taxon>Primates</taxon>
        <taxon>Haplorrhini</taxon>
        <taxon>Catarrhini</taxon>
        <taxon>Hominidae</taxon>
        <taxon>Homo</taxon>
    </lineage>
</organism>
<gene>
    <name type="primary">SDHD</name>
    <name type="synonym">SDH4</name>
</gene>
<proteinExistence type="evidence at protein level"/>
<name>DHSD_HUMAN</name>